<name>GATA_COXBU</name>
<evidence type="ECO:0000255" key="1">
    <source>
        <dbReference type="HAMAP-Rule" id="MF_00120"/>
    </source>
</evidence>
<dbReference type="EC" id="6.3.5.7" evidence="1"/>
<dbReference type="EMBL" id="AE016828">
    <property type="protein sequence ID" value="AAO90971.1"/>
    <property type="molecule type" value="Genomic_DNA"/>
</dbReference>
<dbReference type="RefSeq" id="NP_820457.1">
    <property type="nucleotide sequence ID" value="NC_002971.4"/>
</dbReference>
<dbReference type="RefSeq" id="WP_005772005.1">
    <property type="nucleotide sequence ID" value="NZ_CDBG01000001.1"/>
</dbReference>
<dbReference type="SMR" id="Q83BM9"/>
<dbReference type="STRING" id="227377.CBU_1474"/>
<dbReference type="DNASU" id="1209384"/>
<dbReference type="EnsemblBacteria" id="AAO90971">
    <property type="protein sequence ID" value="AAO90971"/>
    <property type="gene ID" value="CBU_1474"/>
</dbReference>
<dbReference type="GeneID" id="1209384"/>
<dbReference type="KEGG" id="cbu:CBU_1474"/>
<dbReference type="PATRIC" id="fig|227377.7.peg.1474"/>
<dbReference type="eggNOG" id="COG0154">
    <property type="taxonomic scope" value="Bacteria"/>
</dbReference>
<dbReference type="HOGENOM" id="CLU_009600_0_3_6"/>
<dbReference type="OrthoDB" id="9811471at2"/>
<dbReference type="Proteomes" id="UP000002671">
    <property type="component" value="Chromosome"/>
</dbReference>
<dbReference type="GO" id="GO:0030956">
    <property type="term" value="C:glutamyl-tRNA(Gln) amidotransferase complex"/>
    <property type="evidence" value="ECO:0007669"/>
    <property type="project" value="InterPro"/>
</dbReference>
<dbReference type="GO" id="GO:0005524">
    <property type="term" value="F:ATP binding"/>
    <property type="evidence" value="ECO:0007669"/>
    <property type="project" value="UniProtKB-KW"/>
</dbReference>
<dbReference type="GO" id="GO:0050567">
    <property type="term" value="F:glutaminyl-tRNA synthase (glutamine-hydrolyzing) activity"/>
    <property type="evidence" value="ECO:0007669"/>
    <property type="project" value="UniProtKB-UniRule"/>
</dbReference>
<dbReference type="GO" id="GO:0006412">
    <property type="term" value="P:translation"/>
    <property type="evidence" value="ECO:0007669"/>
    <property type="project" value="UniProtKB-UniRule"/>
</dbReference>
<dbReference type="Gene3D" id="3.90.1300.10">
    <property type="entry name" value="Amidase signature (AS) domain"/>
    <property type="match status" value="1"/>
</dbReference>
<dbReference type="HAMAP" id="MF_00120">
    <property type="entry name" value="GatA"/>
    <property type="match status" value="1"/>
</dbReference>
<dbReference type="InterPro" id="IPR000120">
    <property type="entry name" value="Amidase"/>
</dbReference>
<dbReference type="InterPro" id="IPR020556">
    <property type="entry name" value="Amidase_CS"/>
</dbReference>
<dbReference type="InterPro" id="IPR023631">
    <property type="entry name" value="Amidase_dom"/>
</dbReference>
<dbReference type="InterPro" id="IPR036928">
    <property type="entry name" value="AS_sf"/>
</dbReference>
<dbReference type="InterPro" id="IPR004412">
    <property type="entry name" value="GatA"/>
</dbReference>
<dbReference type="NCBIfam" id="TIGR00132">
    <property type="entry name" value="gatA"/>
    <property type="match status" value="1"/>
</dbReference>
<dbReference type="PANTHER" id="PTHR11895:SF151">
    <property type="entry name" value="GLUTAMYL-TRNA(GLN) AMIDOTRANSFERASE SUBUNIT A"/>
    <property type="match status" value="1"/>
</dbReference>
<dbReference type="PANTHER" id="PTHR11895">
    <property type="entry name" value="TRANSAMIDASE"/>
    <property type="match status" value="1"/>
</dbReference>
<dbReference type="Pfam" id="PF01425">
    <property type="entry name" value="Amidase"/>
    <property type="match status" value="1"/>
</dbReference>
<dbReference type="SUPFAM" id="SSF75304">
    <property type="entry name" value="Amidase signature (AS) enzymes"/>
    <property type="match status" value="1"/>
</dbReference>
<dbReference type="PROSITE" id="PS00571">
    <property type="entry name" value="AMIDASES"/>
    <property type="match status" value="1"/>
</dbReference>
<comment type="function">
    <text evidence="1">Allows the formation of correctly charged Gln-tRNA(Gln) through the transamidation of misacylated Glu-tRNA(Gln) in organisms which lack glutaminyl-tRNA synthetase. The reaction takes place in the presence of glutamine and ATP through an activated gamma-phospho-Glu-tRNA(Gln).</text>
</comment>
<comment type="catalytic activity">
    <reaction evidence="1">
        <text>L-glutamyl-tRNA(Gln) + L-glutamine + ATP + H2O = L-glutaminyl-tRNA(Gln) + L-glutamate + ADP + phosphate + H(+)</text>
        <dbReference type="Rhea" id="RHEA:17521"/>
        <dbReference type="Rhea" id="RHEA-COMP:9681"/>
        <dbReference type="Rhea" id="RHEA-COMP:9684"/>
        <dbReference type="ChEBI" id="CHEBI:15377"/>
        <dbReference type="ChEBI" id="CHEBI:15378"/>
        <dbReference type="ChEBI" id="CHEBI:29985"/>
        <dbReference type="ChEBI" id="CHEBI:30616"/>
        <dbReference type="ChEBI" id="CHEBI:43474"/>
        <dbReference type="ChEBI" id="CHEBI:58359"/>
        <dbReference type="ChEBI" id="CHEBI:78520"/>
        <dbReference type="ChEBI" id="CHEBI:78521"/>
        <dbReference type="ChEBI" id="CHEBI:456216"/>
        <dbReference type="EC" id="6.3.5.7"/>
    </reaction>
</comment>
<comment type="subunit">
    <text evidence="1">Heterotrimer of A, B and C subunits.</text>
</comment>
<comment type="similarity">
    <text evidence="1">Belongs to the amidase family. GatA subfamily.</text>
</comment>
<proteinExistence type="inferred from homology"/>
<feature type="chain" id="PRO_0000105160" description="Glutamyl-tRNA(Gln) amidotransferase subunit A">
    <location>
        <begin position="1"/>
        <end position="483"/>
    </location>
</feature>
<feature type="active site" description="Charge relay system" evidence="1">
    <location>
        <position position="76"/>
    </location>
</feature>
<feature type="active site" description="Charge relay system" evidence="1">
    <location>
        <position position="151"/>
    </location>
</feature>
<feature type="active site" description="Acyl-ester intermediate" evidence="1">
    <location>
        <position position="175"/>
    </location>
</feature>
<gene>
    <name evidence="1" type="primary">gatA</name>
    <name type="ordered locus">CBU_1474</name>
</gene>
<reference key="1">
    <citation type="journal article" date="2003" name="Proc. Natl. Acad. Sci. U.S.A.">
        <title>Complete genome sequence of the Q-fever pathogen, Coxiella burnetii.</title>
        <authorList>
            <person name="Seshadri R."/>
            <person name="Paulsen I.T."/>
            <person name="Eisen J.A."/>
            <person name="Read T.D."/>
            <person name="Nelson K.E."/>
            <person name="Nelson W.C."/>
            <person name="Ward N.L."/>
            <person name="Tettelin H."/>
            <person name="Davidsen T.M."/>
            <person name="Beanan M.J."/>
            <person name="DeBoy R.T."/>
            <person name="Daugherty S.C."/>
            <person name="Brinkac L.M."/>
            <person name="Madupu R."/>
            <person name="Dodson R.J."/>
            <person name="Khouri H.M."/>
            <person name="Lee K.H."/>
            <person name="Carty H.A."/>
            <person name="Scanlan D."/>
            <person name="Heinzen R.A."/>
            <person name="Thompson H.A."/>
            <person name="Samuel J.E."/>
            <person name="Fraser C.M."/>
            <person name="Heidelberg J.F."/>
        </authorList>
    </citation>
    <scope>NUCLEOTIDE SEQUENCE [LARGE SCALE GENOMIC DNA]</scope>
    <source>
        <strain>RSA 493 / Nine Mile phase I</strain>
    </source>
</reference>
<organism>
    <name type="scientific">Coxiella burnetii (strain RSA 493 / Nine Mile phase I)</name>
    <dbReference type="NCBI Taxonomy" id="227377"/>
    <lineage>
        <taxon>Bacteria</taxon>
        <taxon>Pseudomonadati</taxon>
        <taxon>Pseudomonadota</taxon>
        <taxon>Gammaproteobacteria</taxon>
        <taxon>Legionellales</taxon>
        <taxon>Coxiellaceae</taxon>
        <taxon>Coxiella</taxon>
    </lineage>
</organism>
<protein>
    <recommendedName>
        <fullName evidence="1">Glutamyl-tRNA(Gln) amidotransferase subunit A</fullName>
        <shortName evidence="1">Glu-ADT subunit A</shortName>
        <ecNumber evidence="1">6.3.5.7</ecNumber>
    </recommendedName>
</protein>
<accession>Q83BM9</accession>
<sequence>MHQKTIAELKQDLRDKTISSVELTQHFLDRIKTINPTLNSFISITEEYALTQAKAADARLAKGEATSLTGIPIAQKDIFCTKDIKTSCGSKMLDNFIAPYDATVVEQLNKAGAILIGKTNMDEFAMGSSNENSYFGAVKNPWDLERVPGGSSGGSAAAVAARLVPGATGTDTGGSIRQPAALCGITGLKPTYGRVSRYGMIAFASSLDQAGPMAQTAEDAALLLNALAGHDAKDSTSINKNVPDYTATLTTSLEGLKVGLPKEYFGEGLNSSIAESIETVKKTLEKMGATFIEIQLPHTDFAAPAYYVLAPAECSSNLARYDGVRYGYRCDKPVDLDDLYKRSRTEGFGSEVKRRIMIGTYVLSAGYYDAYYLKAQKIRRLIRDDFMKAFETVDVILTPATPTPAFKLNEKIADPVAMYLSDVYTIAVNLAGLPAIAFPAGFMDQLPIGAQLIGNYFEEARLLNITHRYQQETDWHKQSPKLR</sequence>
<keyword id="KW-0067">ATP-binding</keyword>
<keyword id="KW-0436">Ligase</keyword>
<keyword id="KW-0547">Nucleotide-binding</keyword>
<keyword id="KW-0648">Protein biosynthesis</keyword>
<keyword id="KW-1185">Reference proteome</keyword>